<comment type="function">
    <text evidence="1">Involved in the degradation of phospho-AI-2, thereby terminating induction of the lsr operon and closing the AI-2 signaling cycle. Catalyzes the conversion of (4S)-4-hydroxy-5-phosphonooxypentane-2,3-dione (P-DPD) to 3-hydroxy-5-phosphonooxypentane-2,4-dione (P-HPD).</text>
</comment>
<comment type="catalytic activity">
    <reaction evidence="1">
        <text>(2S)-2-hydroxy-3,4-dioxopentyl phosphate = 3-hydroxy-2,4-dioxopentyl phosphate</text>
        <dbReference type="Rhea" id="RHEA:44360"/>
        <dbReference type="ChEBI" id="CHEBI:71677"/>
        <dbReference type="ChEBI" id="CHEBI:84359"/>
        <dbReference type="EC" id="5.3.1.32"/>
    </reaction>
</comment>
<comment type="subunit">
    <text evidence="1">Homodimer.</text>
</comment>
<comment type="subcellular location">
    <subcellularLocation>
        <location evidence="1">Cytoplasm</location>
    </subcellularLocation>
</comment>
<comment type="similarity">
    <text evidence="1">Belongs to the LsrG family.</text>
</comment>
<sequence>MHVTLVEINVHEDKVDEFIEVFRQNHLGSVQEEGNLRFDVLQDPEVNSRFYIYEAYKDEDAVAFHKTTPHYKTCVAKLESLMTGPRKKRLFNGLMP</sequence>
<reference key="1">
    <citation type="journal article" date="2001" name="Nature">
        <title>Genome sequence of enterohaemorrhagic Escherichia coli O157:H7.</title>
        <authorList>
            <person name="Perna N.T."/>
            <person name="Plunkett G. III"/>
            <person name="Burland V."/>
            <person name="Mau B."/>
            <person name="Glasner J.D."/>
            <person name="Rose D.J."/>
            <person name="Mayhew G.F."/>
            <person name="Evans P.S."/>
            <person name="Gregor J."/>
            <person name="Kirkpatrick H.A."/>
            <person name="Posfai G."/>
            <person name="Hackett J."/>
            <person name="Klink S."/>
            <person name="Boutin A."/>
            <person name="Shao Y."/>
            <person name="Miller L."/>
            <person name="Grotbeck E.J."/>
            <person name="Davis N.W."/>
            <person name="Lim A."/>
            <person name="Dimalanta E.T."/>
            <person name="Potamousis K."/>
            <person name="Apodaca J."/>
            <person name="Anantharaman T.S."/>
            <person name="Lin J."/>
            <person name="Yen G."/>
            <person name="Schwartz D.C."/>
            <person name="Welch R.A."/>
            <person name="Blattner F.R."/>
        </authorList>
    </citation>
    <scope>NUCLEOTIDE SEQUENCE [LARGE SCALE GENOMIC DNA]</scope>
    <source>
        <strain>O157:H7 / EDL933 / ATCC 700927 / EHEC</strain>
    </source>
</reference>
<reference key="2">
    <citation type="journal article" date="2001" name="DNA Res.">
        <title>Complete genome sequence of enterohemorrhagic Escherichia coli O157:H7 and genomic comparison with a laboratory strain K-12.</title>
        <authorList>
            <person name="Hayashi T."/>
            <person name="Makino K."/>
            <person name="Ohnishi M."/>
            <person name="Kurokawa K."/>
            <person name="Ishii K."/>
            <person name="Yokoyama K."/>
            <person name="Han C.-G."/>
            <person name="Ohtsubo E."/>
            <person name="Nakayama K."/>
            <person name="Murata T."/>
            <person name="Tanaka M."/>
            <person name="Tobe T."/>
            <person name="Iida T."/>
            <person name="Takami H."/>
            <person name="Honda T."/>
            <person name="Sasakawa C."/>
            <person name="Ogasawara N."/>
            <person name="Yasunaga T."/>
            <person name="Kuhara S."/>
            <person name="Shiba T."/>
            <person name="Hattori M."/>
            <person name="Shinagawa H."/>
        </authorList>
    </citation>
    <scope>NUCLEOTIDE SEQUENCE [LARGE SCALE GENOMIC DNA]</scope>
    <source>
        <strain>O157:H7 / Sakai / RIMD 0509952 / EHEC</strain>
    </source>
</reference>
<protein>
    <recommendedName>
        <fullName evidence="1">(4S)-4-hydroxy-5-phosphonooxypentane-2,3-dione isomerase</fullName>
        <ecNumber evidence="1">5.3.1.32</ecNumber>
    </recommendedName>
    <alternativeName>
        <fullName evidence="1">Autoinducer 2-degrading protein LsrG</fullName>
        <shortName evidence="1">AI-2-degrading protein LsrG</shortName>
    </alternativeName>
    <alternativeName>
        <fullName evidence="1">Phospho-(S)-4,5-dihydroxy-2,3-pentanedione isomerase</fullName>
    </alternativeName>
    <alternativeName>
        <fullName evidence="1">Phospho-AI-2 isomerase</fullName>
    </alternativeName>
</protein>
<accession>P64462</accession>
<accession>P76144</accession>
<feature type="chain" id="PRO_0000168948" description="(4S)-4-hydroxy-5-phosphonooxypentane-2,3-dione isomerase">
    <location>
        <begin position="1"/>
        <end position="96"/>
    </location>
</feature>
<feature type="domain" description="ABM" evidence="1">
    <location>
        <begin position="2"/>
        <end position="91"/>
    </location>
</feature>
<evidence type="ECO:0000255" key="1">
    <source>
        <dbReference type="HAMAP-Rule" id="MF_02051"/>
    </source>
</evidence>
<keyword id="KW-0963">Cytoplasm</keyword>
<keyword id="KW-0413">Isomerase</keyword>
<keyword id="KW-1185">Reference proteome</keyword>
<proteinExistence type="inferred from homology"/>
<dbReference type="EC" id="5.3.1.32" evidence="1"/>
<dbReference type="EMBL" id="AE005174">
    <property type="protein sequence ID" value="AAG56248.1"/>
    <property type="molecule type" value="Genomic_DNA"/>
</dbReference>
<dbReference type="EMBL" id="BA000007">
    <property type="protein sequence ID" value="BAB35548.1"/>
    <property type="molecule type" value="Genomic_DNA"/>
</dbReference>
<dbReference type="PIR" id="D85723">
    <property type="entry name" value="D85723"/>
</dbReference>
<dbReference type="PIR" id="E90894">
    <property type="entry name" value="E90894"/>
</dbReference>
<dbReference type="RefSeq" id="NP_310152.1">
    <property type="nucleotide sequence ID" value="NC_002695.1"/>
</dbReference>
<dbReference type="RefSeq" id="WP_000558527.1">
    <property type="nucleotide sequence ID" value="NZ_VOAI01000024.1"/>
</dbReference>
<dbReference type="SMR" id="P64462"/>
<dbReference type="STRING" id="155864.Z2187"/>
<dbReference type="GeneID" id="75057398"/>
<dbReference type="GeneID" id="917322"/>
<dbReference type="KEGG" id="ece:Z2187"/>
<dbReference type="KEGG" id="ecs:ECs_2125"/>
<dbReference type="PATRIC" id="fig|386585.9.peg.2231"/>
<dbReference type="eggNOG" id="COG1359">
    <property type="taxonomic scope" value="Bacteria"/>
</dbReference>
<dbReference type="HOGENOM" id="CLU_131496_3_0_6"/>
<dbReference type="OMA" id="KETAHYQ"/>
<dbReference type="Proteomes" id="UP000000558">
    <property type="component" value="Chromosome"/>
</dbReference>
<dbReference type="Proteomes" id="UP000002519">
    <property type="component" value="Chromosome"/>
</dbReference>
<dbReference type="GO" id="GO:0005829">
    <property type="term" value="C:cytosol"/>
    <property type="evidence" value="ECO:0007669"/>
    <property type="project" value="TreeGrafter"/>
</dbReference>
<dbReference type="GO" id="GO:0002952">
    <property type="term" value="F:(4S)-4-hydroxy-5-phosphonooxypentane-2,3-dione isomerase activity"/>
    <property type="evidence" value="ECO:0007669"/>
    <property type="project" value="UniProtKB-EC"/>
</dbReference>
<dbReference type="GO" id="GO:0016491">
    <property type="term" value="F:oxidoreductase activity"/>
    <property type="evidence" value="ECO:0007669"/>
    <property type="project" value="TreeGrafter"/>
</dbReference>
<dbReference type="FunFam" id="3.30.70.100:FF:000016">
    <property type="entry name" value="(4S)-4-hydroxy-5-phosphonooxypentane-2,3-dione isomerase"/>
    <property type="match status" value="1"/>
</dbReference>
<dbReference type="Gene3D" id="3.30.70.100">
    <property type="match status" value="1"/>
</dbReference>
<dbReference type="HAMAP" id="MF_02051">
    <property type="entry name" value="LsrG"/>
    <property type="match status" value="1"/>
</dbReference>
<dbReference type="InterPro" id="IPR007138">
    <property type="entry name" value="ABM_dom"/>
</dbReference>
<dbReference type="InterPro" id="IPR050744">
    <property type="entry name" value="AI-2_Isomerase_LsrG"/>
</dbReference>
<dbReference type="InterPro" id="IPR011008">
    <property type="entry name" value="Dimeric_a/b-barrel"/>
</dbReference>
<dbReference type="InterPro" id="IPR033672">
    <property type="entry name" value="LsrG"/>
</dbReference>
<dbReference type="NCBIfam" id="NF007791">
    <property type="entry name" value="PRK10486.1"/>
    <property type="match status" value="1"/>
</dbReference>
<dbReference type="PANTHER" id="PTHR33336:SF1">
    <property type="entry name" value="(4S)-4-HYDROXY-5-PHOSPHONOOXYPENTANE-2,3-DIONE ISOMERASE"/>
    <property type="match status" value="1"/>
</dbReference>
<dbReference type="PANTHER" id="PTHR33336">
    <property type="entry name" value="QUINOL MONOOXYGENASE YGIN-RELATED"/>
    <property type="match status" value="1"/>
</dbReference>
<dbReference type="Pfam" id="PF03992">
    <property type="entry name" value="ABM"/>
    <property type="match status" value="1"/>
</dbReference>
<dbReference type="SUPFAM" id="SSF54909">
    <property type="entry name" value="Dimeric alpha+beta barrel"/>
    <property type="match status" value="1"/>
</dbReference>
<dbReference type="PROSITE" id="PS51725">
    <property type="entry name" value="ABM"/>
    <property type="match status" value="1"/>
</dbReference>
<gene>
    <name evidence="1" type="primary">lsrG</name>
    <name type="ordered locus">Z2187</name>
    <name type="ordered locus">ECs2125</name>
</gene>
<organism>
    <name type="scientific">Escherichia coli O157:H7</name>
    <dbReference type="NCBI Taxonomy" id="83334"/>
    <lineage>
        <taxon>Bacteria</taxon>
        <taxon>Pseudomonadati</taxon>
        <taxon>Pseudomonadota</taxon>
        <taxon>Gammaproteobacteria</taxon>
        <taxon>Enterobacterales</taxon>
        <taxon>Enterobacteriaceae</taxon>
        <taxon>Escherichia</taxon>
    </lineage>
</organism>
<name>LSRG_ECO57</name>